<feature type="chain" id="PRO_1000187345" description="Methylthioribulose-1-phosphate dehydratase">
    <location>
        <begin position="1"/>
        <end position="212"/>
    </location>
</feature>
<feature type="binding site" evidence="1">
    <location>
        <position position="97"/>
    </location>
    <ligand>
        <name>Zn(2+)</name>
        <dbReference type="ChEBI" id="CHEBI:29105"/>
    </ligand>
</feature>
<feature type="binding site" evidence="1">
    <location>
        <position position="99"/>
    </location>
    <ligand>
        <name>Zn(2+)</name>
        <dbReference type="ChEBI" id="CHEBI:29105"/>
    </ligand>
</feature>
<name>MTNB_BACC7</name>
<gene>
    <name evidence="1" type="primary">mtnB</name>
    <name type="ordered locus">BCAH187_A4169</name>
</gene>
<protein>
    <recommendedName>
        <fullName evidence="1">Methylthioribulose-1-phosphate dehydratase</fullName>
        <shortName evidence="1">MTRu-1-P dehydratase</shortName>
        <ecNumber evidence="1">4.2.1.109</ecNumber>
    </recommendedName>
</protein>
<sequence length="212" mass="23969">MKQLFRQWYDLSEIKKELTTRNWFPATSGNISIKVSHEPLTFLITASGKDKTKTTPDDFLLVDHLGVPVLETELRPSAETILHTHIYNNTNAGCVLHVHTTDNNVITNLYSDAVTLQNQEIIKALDIWEEDATIHIPIIENHAHIPTLGENFRKHIQGDSGAVLIRNHGITVWGRDSFDAKKRLEAYEFLFQFHIKLLSIQGGVSNGANSYS</sequence>
<proteinExistence type="inferred from homology"/>
<dbReference type="EC" id="4.2.1.109" evidence="1"/>
<dbReference type="EMBL" id="CP001177">
    <property type="protein sequence ID" value="ACJ81637.1"/>
    <property type="molecule type" value="Genomic_DNA"/>
</dbReference>
<dbReference type="SMR" id="B7HN16"/>
<dbReference type="KEGG" id="bcr:BCAH187_A4169"/>
<dbReference type="HOGENOM" id="CLU_006033_4_1_9"/>
<dbReference type="UniPathway" id="UPA00904">
    <property type="reaction ID" value="UER00875"/>
</dbReference>
<dbReference type="Proteomes" id="UP000002214">
    <property type="component" value="Chromosome"/>
</dbReference>
<dbReference type="GO" id="GO:0005737">
    <property type="term" value="C:cytoplasm"/>
    <property type="evidence" value="ECO:0007669"/>
    <property type="project" value="InterPro"/>
</dbReference>
<dbReference type="GO" id="GO:0046570">
    <property type="term" value="F:methylthioribulose 1-phosphate dehydratase activity"/>
    <property type="evidence" value="ECO:0007669"/>
    <property type="project" value="UniProtKB-UniRule"/>
</dbReference>
<dbReference type="GO" id="GO:0008270">
    <property type="term" value="F:zinc ion binding"/>
    <property type="evidence" value="ECO:0007669"/>
    <property type="project" value="UniProtKB-UniRule"/>
</dbReference>
<dbReference type="GO" id="GO:0019509">
    <property type="term" value="P:L-methionine salvage from methylthioadenosine"/>
    <property type="evidence" value="ECO:0007669"/>
    <property type="project" value="UniProtKB-UniRule"/>
</dbReference>
<dbReference type="FunFam" id="3.40.225.10:FF:000007">
    <property type="entry name" value="Methylthioribulose-1-phosphate dehydratase"/>
    <property type="match status" value="1"/>
</dbReference>
<dbReference type="Gene3D" id="3.40.225.10">
    <property type="entry name" value="Class II aldolase/adducin N-terminal domain"/>
    <property type="match status" value="1"/>
</dbReference>
<dbReference type="HAMAP" id="MF_01677">
    <property type="entry name" value="Salvage_MtnB"/>
    <property type="match status" value="1"/>
</dbReference>
<dbReference type="InterPro" id="IPR001303">
    <property type="entry name" value="Aldolase_II/adducin_N"/>
</dbReference>
<dbReference type="InterPro" id="IPR036409">
    <property type="entry name" value="Aldolase_II/adducin_N_sf"/>
</dbReference>
<dbReference type="InterPro" id="IPR017714">
    <property type="entry name" value="MethylthioRu-1-P_deHdtase_MtnB"/>
</dbReference>
<dbReference type="NCBIfam" id="NF005244">
    <property type="entry name" value="PRK06754.1"/>
    <property type="match status" value="1"/>
</dbReference>
<dbReference type="NCBIfam" id="TIGR03328">
    <property type="entry name" value="salvage_mtnB"/>
    <property type="match status" value="1"/>
</dbReference>
<dbReference type="PANTHER" id="PTHR10640">
    <property type="entry name" value="METHYLTHIORIBULOSE-1-PHOSPHATE DEHYDRATASE"/>
    <property type="match status" value="1"/>
</dbReference>
<dbReference type="PANTHER" id="PTHR10640:SF7">
    <property type="entry name" value="METHYLTHIORIBULOSE-1-PHOSPHATE DEHYDRATASE"/>
    <property type="match status" value="1"/>
</dbReference>
<dbReference type="Pfam" id="PF00596">
    <property type="entry name" value="Aldolase_II"/>
    <property type="match status" value="1"/>
</dbReference>
<dbReference type="SMART" id="SM01007">
    <property type="entry name" value="Aldolase_II"/>
    <property type="match status" value="1"/>
</dbReference>
<dbReference type="SUPFAM" id="SSF53639">
    <property type="entry name" value="AraD/HMP-PK domain-like"/>
    <property type="match status" value="1"/>
</dbReference>
<evidence type="ECO:0000255" key="1">
    <source>
        <dbReference type="HAMAP-Rule" id="MF_01677"/>
    </source>
</evidence>
<comment type="function">
    <text evidence="1">Catalyzes the dehydration of methylthioribulose-1-phosphate (MTRu-1-P) into 2,3-diketo-5-methylthiopentyl-1-phosphate (DK-MTP-1-P).</text>
</comment>
<comment type="catalytic activity">
    <reaction evidence="1">
        <text>5-(methylsulfanyl)-D-ribulose 1-phosphate = 5-methylsulfanyl-2,3-dioxopentyl phosphate + H2O</text>
        <dbReference type="Rhea" id="RHEA:15549"/>
        <dbReference type="ChEBI" id="CHEBI:15377"/>
        <dbReference type="ChEBI" id="CHEBI:58548"/>
        <dbReference type="ChEBI" id="CHEBI:58828"/>
        <dbReference type="EC" id="4.2.1.109"/>
    </reaction>
</comment>
<comment type="cofactor">
    <cofactor evidence="1">
        <name>Zn(2+)</name>
        <dbReference type="ChEBI" id="CHEBI:29105"/>
    </cofactor>
    <text evidence="1">Binds 1 zinc ion per subunit.</text>
</comment>
<comment type="pathway">
    <text evidence="1">Amino-acid biosynthesis; L-methionine biosynthesis via salvage pathway; L-methionine from S-methyl-5-thio-alpha-D-ribose 1-phosphate: step 2/6.</text>
</comment>
<comment type="subunit">
    <text evidence="1">Homotetramer.</text>
</comment>
<comment type="similarity">
    <text evidence="1">Belongs to the aldolase class II family. MtnB subfamily.</text>
</comment>
<keyword id="KW-0028">Amino-acid biosynthesis</keyword>
<keyword id="KW-0456">Lyase</keyword>
<keyword id="KW-0479">Metal-binding</keyword>
<keyword id="KW-0486">Methionine biosynthesis</keyword>
<keyword id="KW-0862">Zinc</keyword>
<accession>B7HN16</accession>
<reference key="1">
    <citation type="submission" date="2008-10" db="EMBL/GenBank/DDBJ databases">
        <title>Genome sequence of Bacillus cereus AH187.</title>
        <authorList>
            <person name="Dodson R.J."/>
            <person name="Durkin A.S."/>
            <person name="Rosovitz M.J."/>
            <person name="Rasko D.A."/>
            <person name="Kolsto A.B."/>
            <person name="Okstad O.A."/>
            <person name="Ravel J."/>
            <person name="Sutton G."/>
        </authorList>
    </citation>
    <scope>NUCLEOTIDE SEQUENCE [LARGE SCALE GENOMIC DNA]</scope>
    <source>
        <strain>AH187</strain>
    </source>
</reference>
<organism>
    <name type="scientific">Bacillus cereus (strain AH187)</name>
    <dbReference type="NCBI Taxonomy" id="405534"/>
    <lineage>
        <taxon>Bacteria</taxon>
        <taxon>Bacillati</taxon>
        <taxon>Bacillota</taxon>
        <taxon>Bacilli</taxon>
        <taxon>Bacillales</taxon>
        <taxon>Bacillaceae</taxon>
        <taxon>Bacillus</taxon>
        <taxon>Bacillus cereus group</taxon>
    </lineage>
</organism>